<organism>
    <name type="scientific">Shewanella oneidensis (strain ATCC 700550 / JCM 31522 / CIP 106686 / LMG 19005 / NCIMB 14063 / MR-1)</name>
    <dbReference type="NCBI Taxonomy" id="211586"/>
    <lineage>
        <taxon>Bacteria</taxon>
        <taxon>Pseudomonadati</taxon>
        <taxon>Pseudomonadota</taxon>
        <taxon>Gammaproteobacteria</taxon>
        <taxon>Alteromonadales</taxon>
        <taxon>Shewanellaceae</taxon>
        <taxon>Shewanella</taxon>
    </lineage>
</organism>
<dbReference type="EMBL" id="AE014299">
    <property type="protein sequence ID" value="AAN54900.1"/>
    <property type="molecule type" value="Genomic_DNA"/>
</dbReference>
<dbReference type="RefSeq" id="NP_717456.1">
    <property type="nucleotide sequence ID" value="NC_004347.2"/>
</dbReference>
<dbReference type="RefSeq" id="WP_011071962.1">
    <property type="nucleotide sequence ID" value="NC_004347.2"/>
</dbReference>
<dbReference type="SMR" id="Q8EFW7"/>
<dbReference type="STRING" id="211586.SO_1848"/>
<dbReference type="PaxDb" id="211586-SO_1848"/>
<dbReference type="KEGG" id="son:SO_1848"/>
<dbReference type="PATRIC" id="fig|211586.12.peg.1776"/>
<dbReference type="eggNOG" id="ENOG502Z9T9">
    <property type="taxonomic scope" value="Bacteria"/>
</dbReference>
<dbReference type="HOGENOM" id="CLU_1088343_0_0_6"/>
<dbReference type="OrthoDB" id="5761380at2"/>
<dbReference type="BioCyc" id="SONE211586:G1GMP-1696-MONOMER"/>
<dbReference type="Proteomes" id="UP000008186">
    <property type="component" value="Chromosome"/>
</dbReference>
<feature type="chain" id="PRO_0000458835" description="Adaptation to cold protein B">
    <location>
        <begin position="1"/>
        <end position="252"/>
    </location>
</feature>
<protein>
    <recommendedName>
        <fullName evidence="3">Adaptation to cold protein B</fullName>
    </recommendedName>
</protein>
<name>ATCB_SHEON</name>
<gene>
    <name evidence="3" type="primary">atcB</name>
    <name evidence="4" type="ordered locus">SO_1848</name>
</gene>
<keyword id="KW-1185">Reference proteome</keyword>
<keyword id="KW-0346">Stress response</keyword>
<comment type="function">
    <text evidence="1 2">Involved in cold adaptation (PubMed:31482142). Directly interacts with the RNA polymerase and decreases its activity (PubMed:33341675). May direct the DnaK chaperone to the RNA polymerase to sustain life at low temperatures (PubMed:33341675). Overproduction prevents bacterial growth due to RNA polymerase inhibition (PubMed:33341675).</text>
</comment>
<comment type="subunit">
    <text evidence="1 2">Interacts with AtcC, but not with AtcA and AtcJ (PubMed:31482142). Interacts with the RNA polymerase subunits RpoB and RpoC (PubMed:33341675).</text>
</comment>
<comment type="induction">
    <text evidence="1">Part of the atcJABC operon (PubMed:31482142). The operon is constitutively expressed, and expression shows only a very slight increase at low temperature (PubMed:31482142).</text>
</comment>
<comment type="disruption phenotype">
    <text evidence="1">Deletion of the gene leads to a dramatically reduced growth at low temperature.</text>
</comment>
<evidence type="ECO:0000269" key="1">
    <source>
    </source>
</evidence>
<evidence type="ECO:0000269" key="2">
    <source>
    </source>
</evidence>
<evidence type="ECO:0000303" key="3">
    <source>
    </source>
</evidence>
<evidence type="ECO:0000312" key="4">
    <source>
        <dbReference type="EMBL" id="AAN54900.1"/>
    </source>
</evidence>
<proteinExistence type="evidence at protein level"/>
<reference key="1">
    <citation type="journal article" date="2002" name="Nat. Biotechnol.">
        <title>Genome sequence of the dissimilatory metal ion-reducing bacterium Shewanella oneidensis.</title>
        <authorList>
            <person name="Heidelberg J.F."/>
            <person name="Paulsen I.T."/>
            <person name="Nelson K.E."/>
            <person name="Gaidos E.J."/>
            <person name="Nelson W.C."/>
            <person name="Read T.D."/>
            <person name="Eisen J.A."/>
            <person name="Seshadri R."/>
            <person name="Ward N.L."/>
            <person name="Methe B.A."/>
            <person name="Clayton R.A."/>
            <person name="Meyer T."/>
            <person name="Tsapin A."/>
            <person name="Scott J."/>
            <person name="Beanan M.J."/>
            <person name="Brinkac L.M."/>
            <person name="Daugherty S.C."/>
            <person name="DeBoy R.T."/>
            <person name="Dodson R.J."/>
            <person name="Durkin A.S."/>
            <person name="Haft D.H."/>
            <person name="Kolonay J.F."/>
            <person name="Madupu R."/>
            <person name="Peterson J.D."/>
            <person name="Umayam L.A."/>
            <person name="White O."/>
            <person name="Wolf A.M."/>
            <person name="Vamathevan J.J."/>
            <person name="Weidman J.F."/>
            <person name="Impraim M."/>
            <person name="Lee K."/>
            <person name="Berry K.J."/>
            <person name="Lee C."/>
            <person name="Mueller J."/>
            <person name="Khouri H.M."/>
            <person name="Gill J."/>
            <person name="Utterback T.R."/>
            <person name="McDonald L.A."/>
            <person name="Feldblyum T.V."/>
            <person name="Smith H.O."/>
            <person name="Venter J.C."/>
            <person name="Nealson K.H."/>
            <person name="Fraser C.M."/>
        </authorList>
    </citation>
    <scope>NUCLEOTIDE SEQUENCE [LARGE SCALE GENOMIC DNA]</scope>
    <source>
        <strain>ATCC 700550 / JCM 31522 / CIP 106686 / LMG 19005 / NCIMB 14063 / MR-1</strain>
    </source>
</reference>
<reference key="2">
    <citation type="journal article" date="2019" name="Commun. Biol.">
        <title>Cold adaptation in the environmental bacterium Shewanella oneidensis is controlled by a J-domain co-chaperone protein network.</title>
        <authorList>
            <person name="Maillot N.J."/>
            <person name="Honore F.A."/>
            <person name="Byrne D."/>
            <person name="Mejean V."/>
            <person name="Genest O."/>
        </authorList>
    </citation>
    <scope>FUNCTION</scope>
    <scope>INTERACTION WITH ATCC</scope>
    <scope>INDUCTION</scope>
    <scope>DISRUPTION PHENOTYPE</scope>
    <source>
        <strain>MR1-R</strain>
    </source>
</reference>
<reference key="3">
    <citation type="journal article" date="2021" name="Biochem. Biophys. Res. Commun.">
        <title>Modulation of the RNA polymerase activity by AtcB, a protein associated with a DnaK chaperone network in Shewanella oneidensis.</title>
        <authorList>
            <person name="Maillot N.J."/>
            <person name="Infossi P."/>
            <person name="Dementin S."/>
            <person name="Giudici-Orticoni M.T."/>
            <person name="Mejean V."/>
            <person name="Genest O."/>
        </authorList>
    </citation>
    <scope>FUNCTION</scope>
    <scope>INTERACTION WITH RNA POLYMERASE</scope>
    <source>
        <strain>MR1-R</strain>
    </source>
</reference>
<sequence>MNTSLIEITVAEIKELADVEPKQASKRFELIATTMNDEQLVEVIEKMDIVTLTQINSHHDISCPSIMSELMTPEQIRDIVCQQPLYWEEKIKNNAEELIQHTFDFLTYLIRIQDSEEKQTAILECIAEDPAGLFYLSIPFIEMMLGEGHDDEDHINDYYDDEEDTDTIGYDSRVASEEAHSFSLDDPRSLMALIHELAPDVEKAIKNLLRNESSGWETIINKFVNELVIQAKEKNQVTDEYAEVDDMFSFLD</sequence>
<accession>Q8EFW7</accession>